<name>CAPSP_ADE02</name>
<proteinExistence type="evidence at protein level"/>
<accession>P03276</accession>
<gene>
    <name evidence="1" type="primary">L2</name>
</gene>
<organismHost>
    <name type="scientific">Homo sapiens</name>
    <name type="common">Human</name>
    <dbReference type="NCBI Taxonomy" id="9606"/>
</organismHost>
<dbReference type="EMBL" id="J01917">
    <property type="protein sequence ID" value="AAA92211.1"/>
    <property type="molecule type" value="Genomic_DNA"/>
</dbReference>
<dbReference type="PIR" id="A03847">
    <property type="entry name" value="XZAD32"/>
</dbReference>
<dbReference type="RefSeq" id="AP_000170.1">
    <property type="nucleotide sequence ID" value="AC_000007.1"/>
</dbReference>
<dbReference type="RefSeq" id="NP_040521.1">
    <property type="nucleotide sequence ID" value="NC_001405.1"/>
</dbReference>
<dbReference type="PDB" id="1X9P">
    <property type="method" value="X-ray"/>
    <property type="resolution" value="3.30 A"/>
    <property type="chains" value="A=49-571"/>
</dbReference>
<dbReference type="PDB" id="1X9T">
    <property type="method" value="X-ray"/>
    <property type="resolution" value="3.50 A"/>
    <property type="chains" value="A=49-571"/>
</dbReference>
<dbReference type="PDB" id="2C6S">
    <property type="method" value="X-ray"/>
    <property type="resolution" value="3.60 A"/>
    <property type="chains" value="A/B/C/D/E/F/G/H/I/J/K/L/M/N/O=49-571"/>
</dbReference>
<dbReference type="PDB" id="2C9F">
    <property type="method" value="EM"/>
    <property type="resolution" value="16.50 A"/>
    <property type="chains" value="A/B/C/D/E=49-571"/>
</dbReference>
<dbReference type="PDB" id="2C9G">
    <property type="method" value="EM"/>
    <property type="resolution" value="9.30 A"/>
    <property type="chains" value="A/B/C/D/E=49-571"/>
</dbReference>
<dbReference type="PDB" id="4V4U">
    <property type="method" value="EM"/>
    <property type="resolution" value="10.00 A"/>
    <property type="chains" value="A/B/C/D/E=49-571"/>
</dbReference>
<dbReference type="PDBsum" id="1X9P"/>
<dbReference type="PDBsum" id="1X9T"/>
<dbReference type="PDBsum" id="2C6S"/>
<dbReference type="PDBsum" id="2C9F"/>
<dbReference type="PDBsum" id="2C9G"/>
<dbReference type="PDBsum" id="4V4U"/>
<dbReference type="EMDB" id="EMD-1178"/>
<dbReference type="SMR" id="P03276"/>
<dbReference type="ELM" id="P03276"/>
<dbReference type="DrugBank" id="DB02643">
    <property type="generic name" value="N-Dodecyl-N,N-Dimethyl-3-Ammonio-1-Propanesulfonate"/>
</dbReference>
<dbReference type="iPTMnet" id="P03276"/>
<dbReference type="GeneID" id="2652996"/>
<dbReference type="KEGG" id="vg:2652996"/>
<dbReference type="EvolutionaryTrace" id="P03276"/>
<dbReference type="Proteomes" id="UP000008167">
    <property type="component" value="Segment"/>
</dbReference>
<dbReference type="GO" id="GO:0042025">
    <property type="term" value="C:host cell nucleus"/>
    <property type="evidence" value="ECO:0007669"/>
    <property type="project" value="UniProtKB-SubCell"/>
</dbReference>
<dbReference type="GO" id="GO:0039623">
    <property type="term" value="C:T=25 icosahedral viral capsid"/>
    <property type="evidence" value="ECO:0007669"/>
    <property type="project" value="UniProtKB-UniRule"/>
</dbReference>
<dbReference type="GO" id="GO:0005198">
    <property type="term" value="F:structural molecule activity"/>
    <property type="evidence" value="ECO:0007669"/>
    <property type="project" value="UniProtKB-UniRule"/>
</dbReference>
<dbReference type="GO" id="GO:0075512">
    <property type="term" value="P:clathrin-dependent endocytosis of virus by host cell"/>
    <property type="evidence" value="ECO:0007669"/>
    <property type="project" value="UniProtKB-KW"/>
</dbReference>
<dbReference type="GO" id="GO:0019062">
    <property type="term" value="P:virion attachment to host cell"/>
    <property type="evidence" value="ECO:0007669"/>
    <property type="project" value="UniProtKB-UniRule"/>
</dbReference>
<dbReference type="Gene3D" id="3.90.1620.10">
    <property type="entry name" value="adenovirus 2 penton base, domain 2"/>
    <property type="match status" value="1"/>
</dbReference>
<dbReference type="Gene3D" id="2.60.120.550">
    <property type="entry name" value="Penton protein, domain 1"/>
    <property type="match status" value="1"/>
</dbReference>
<dbReference type="HAMAP" id="MF_04052">
    <property type="entry name" value="ADV_CAPSP"/>
    <property type="match status" value="1"/>
</dbReference>
<dbReference type="InterPro" id="IPR002605">
    <property type="entry name" value="Adeno_Penton_B"/>
</dbReference>
<dbReference type="Pfam" id="PF01686">
    <property type="entry name" value="Adeno_Penton_B"/>
    <property type="match status" value="1"/>
</dbReference>
<comment type="function">
    <text evidence="1 4 6 7">Major capsid protein that self-associates to form penton base pentamers, each in the shape of a pentagon, situated at the 12 vertices of the pseudo T=25 capsid. Involved in virus secondary attachment to host cell after initial attachment by the fiber protein. Binds host integrin heterodimer ITGAV-ITGB5 (alphaV-beta5) thereby triggering clathrin-mediated endocytosis of virions. Mediates initial virus attachment to CXADR-negative cells. Binding to integrins ITGAV-ITGB5 also seems to induce macropinocytosis uptake of the virus. As the virus enters the host cell, penton proteins are shed concomitant with virion acidification in the endosome.</text>
</comment>
<comment type="subunit">
    <text evidence="1 3 5 6 7">Interacts with the fiber protein (via N-terminal tail region). Interacts with the capsid vertex protein; this interaction binds the penton base to neighboring peripentonal hexons. Interacts (via the cell attachment site RGD) with host heterodimer ITGAV-ITGB5; this interaction promotes virus internalization. Interacts with host WWP1 and WWP2.</text>
</comment>
<comment type="subcellular location">
    <subcellularLocation>
        <location evidence="1 7">Virion</location>
    </subcellularLocation>
    <subcellularLocation>
        <location evidence="1">Host nucleus</location>
    </subcellularLocation>
    <text evidence="1">Located at each vertex of the virion. Present in 60 copies per virion.</text>
</comment>
<comment type="induction">
    <text evidence="1">Expressed in the late phase of the viral replicative cycle.</text>
</comment>
<comment type="domain">
    <text evidence="1">The cell attachment RGD motif is exposed at the virion surface and is involved in binding to the integrin heterodimer ITGAV-ITGB5.</text>
</comment>
<comment type="miscellaneous">
    <text evidence="1">All late proteins expressed from the major late promoter are produced by alternative splicing and alternative polyadenylation of the same gene giving rise to non-overlapping ORFs. A leader sequence is present in the N-terminus of all these mRNAs and is recognized by the viral shutoff protein to provide expression although conventional translation via ribosome scanning from the cap has been shut off in the host cell.</text>
</comment>
<comment type="similarity">
    <text evidence="1">Belongs to the adenoviridae penton family.</text>
</comment>
<comment type="online information" name="Virus Particle ExploreR db">
    <link uri="https://viperdb.org/Info_Page.php?VDB=1x9p"/>
    <text>Icosahedral capsid structure</text>
</comment>
<comment type="online information" name="Virus Particle ExploreR db">
    <link uri="https://viperdb.org/Info_Page.php?VDB=1x9t"/>
    <text>Icosahedral capsid structure in complex with an ad2 N-terminal fiber peptide</text>
</comment>
<sequence length="571" mass="63255">MQRAAMYEEGPPPSYESVVSAAPVAAALGSPFDAPLDPPFVPPRYLRPTGGRNSIRYSELAPLFDTTRVYLVDNKSTDVASLNYQNDHSNFLTTVIQNNDYSPGEASTQTINLDDRSHWGGDLKTILHTNMPNVNEFMFTNKFKARVMVSRSLTKDKQVELKYEWVEFTLPEGNYSETMTIDLMNNAIVEHYLKVGRQNGVLESDIGVKFDTRNFRLGFDPVTGLVMPGVYTNEAFHPDIILLPGCGVDFTHSRLSNLLGIRKRQPFQEGFRITYDDLEGGNIPALLDVDAYQASLKDDTEQGGDGAGGGNNSGSGAEENSNAAAAAMQPVEDMNDHAIRGDTFATRAEEKRAEAEAAAEAAAPAAQPEVEKPQKKPVIKPLTEDSKKRSYNLISNDSTFTQYRSWYLAYNYGDPQTGIRSWTLLCTPDVTCGSEQVYWSLPDMMQDPVTFRSTSQISNFPVVGAELLPVHSKSFYNDQAVYSQLIRQFTSLTHVFNRFPENQILARPPAPTITTVSENVPALTDHGTLPLRNSIGGVQRVTITDARRRTCPYVYKALGIVSPRVLSSRTF</sequence>
<protein>
    <recommendedName>
        <fullName evidence="1">Penton protein</fullName>
        <shortName evidence="1">CP-P</shortName>
    </recommendedName>
    <alternativeName>
        <fullName evidence="1">Penton base protein</fullName>
    </alternativeName>
    <alternativeName>
        <fullName evidence="1">Protein III</fullName>
    </alternativeName>
</protein>
<organism>
    <name type="scientific">Human adenovirus C serotype 2</name>
    <name type="common">HAdV-2</name>
    <name type="synonym">Human adenovirus 2</name>
    <dbReference type="NCBI Taxonomy" id="10515"/>
    <lineage>
        <taxon>Viruses</taxon>
        <taxon>Varidnaviria</taxon>
        <taxon>Bamfordvirae</taxon>
        <taxon>Preplasmiviricota</taxon>
        <taxon>Tectiliviricetes</taxon>
        <taxon>Rowavirales</taxon>
        <taxon>Adenoviridae</taxon>
        <taxon>Mastadenovirus</taxon>
        <taxon>Human mastadenovirus C</taxon>
    </lineage>
</organism>
<reference key="1">
    <citation type="journal article" date="1984" name="J. Biol. Chem.">
        <title>DNA sequences from the adenovirus 2 genome.</title>
        <authorList>
            <person name="Roberts R.J."/>
            <person name="O'Neill K.E."/>
            <person name="Yen C.E."/>
        </authorList>
    </citation>
    <scope>NUCLEOTIDE SEQUENCE [GENOMIC DNA]</scope>
</reference>
<reference key="2">
    <citation type="journal article" date="1984" name="J. Biol. Chem.">
        <title>Genes encoding the core proteins of adenovirus type 2.</title>
        <authorList>
            <person name="Alestroem P."/>
            <person name="Akusjaervi G."/>
            <person name="Lager M."/>
            <person name="Yeh-kai L."/>
            <person name="Pettersson U."/>
        </authorList>
    </citation>
    <scope>NUCLEOTIDE SEQUENCE [GENOMIC DNA] OF 295-571</scope>
</reference>
<reference key="3">
    <citation type="journal article" date="2012" name="Virology">
        <title>The phosphoproteome of the adenovirus type 2 virion.</title>
        <authorList>
            <person name="Bergstrom Lind S."/>
            <person name="Artemenko K.A."/>
            <person name="Elfineh L."/>
            <person name="Zhao Y."/>
            <person name="Bergquist J."/>
            <person name="Pettersson U."/>
        </authorList>
    </citation>
    <scope>PROTEIN SEQUENCE OF 453-473</scope>
    <scope>PHOSPHORYLATION AT SER-455</scope>
</reference>
<reference key="4">
    <citation type="journal article" date="1999" name="Nature">
        <title>A triple beta-spiral in the adenovirus fibre shaft reveals a new structural motif for a fibrous protein.</title>
        <authorList>
            <person name="van Raaij M.J."/>
            <person name="Mitraki A."/>
            <person name="Lavigne G."/>
            <person name="Cusack S."/>
        </authorList>
    </citation>
    <scope>INTERACTION WITH THE FIBER PROTEIN</scope>
</reference>
<reference key="5">
    <citation type="journal article" date="2002" name="Biochemistry">
        <title>Adenovirus protein involved in virus internalization recruits ubiquitin-protein ligases.</title>
        <authorList>
            <person name="Galinier R."/>
            <person name="Gout E."/>
            <person name="Lortat-Jacob H."/>
            <person name="Wood J."/>
            <person name="Chroboczek J."/>
        </authorList>
    </citation>
    <scope>INTERACTION WITH WWP1 AND WWP2</scope>
</reference>
<reference key="6">
    <citation type="journal article" date="2002" name="J. Cell Biol.">
        <title>Adenovirus triggers macropinocytosis and endosomal leakage together with its clathrin-mediated uptake.</title>
        <authorList>
            <person name="Meier O."/>
            <person name="Boucke K."/>
            <person name="Hammer S.V."/>
            <person name="Keller S."/>
            <person name="Stidwill R.P."/>
            <person name="Hemmi S."/>
            <person name="Greber U.F."/>
        </authorList>
    </citation>
    <scope>FUNCTION</scope>
</reference>
<reference key="7">
    <citation type="journal article" date="2010" name="Virol. J.">
        <title>Integrin alphavbeta5 is a primary receptor for adenovirus in CAR-negative cells.</title>
        <authorList>
            <person name="Lyle C."/>
            <person name="McCormick F."/>
        </authorList>
    </citation>
    <scope>FUNCTION</scope>
    <scope>INTERACTION WITH HOST ITGAV-ITGB5 HETERODIMER</scope>
    <source>
        <strain>Human adenovirus C serotype 5</strain>
    </source>
</reference>
<reference key="8">
    <citation type="journal article" date="2012" name="Viruses">
        <title>Latest insights on adenovirus structure and assembly.</title>
        <authorList>
            <person name="San Martin C."/>
        </authorList>
    </citation>
    <scope>REVIEW</scope>
</reference>
<reference key="9">
    <citation type="journal article" date="2010" name="Science">
        <title>Atomic structure of human adenovirus by cryo-EM reveals interactions among protein networks.</title>
        <authorList>
            <person name="Liu H."/>
            <person name="Jin L."/>
            <person name="Koh S.B."/>
            <person name="Atanasov I."/>
            <person name="Schein S."/>
            <person name="Wu L."/>
            <person name="Zhou Z.H."/>
        </authorList>
    </citation>
    <scope>STRUCTURE BY ELECTRON MICROSCOPY (3.6 ANGSTROMS) OF THE VIRAL PARTICLE</scope>
    <scope>FUNCTION</scope>
    <scope>SUBCELLULAR LOCATION</scope>
    <scope>INTERACTION WITH CAPSID VERTEX PROTEIN</scope>
    <source>
        <strain>Human adenovirus C serotype 5</strain>
    </source>
</reference>
<reference key="10">
    <citation type="journal article" date="2005" name="Mol. Cell">
        <title>The structure of the human adenovirus 2 penton.</title>
        <authorList>
            <person name="Zubieta C."/>
            <person name="Schoehn G."/>
            <person name="Chroboczek J."/>
            <person name="Cusack S."/>
        </authorList>
    </citation>
    <scope>X-RAY CRYSTALLOGRAPHY (3.3 ANGSTROMS) OF 49-571</scope>
</reference>
<reference key="11">
    <citation type="journal article" date="2005" name="EMBO J.">
        <title>A quasi-atomic model of human adenovirus type 5 capsid.</title>
        <authorList>
            <person name="Fabry C.M."/>
            <person name="Rosa-Calatrava M."/>
            <person name="Conway J.F."/>
            <person name="Zubieta C."/>
            <person name="Cusack S."/>
            <person name="Ruigrok R.W."/>
            <person name="Schoehn G."/>
        </authorList>
    </citation>
    <scope>STRUCTURE BY ELECTRON MICROSCOPY (10.0 ANGSTROMS) OF 49-571</scope>
    <source>
        <strain>Human adenovirus C serotype 5</strain>
    </source>
</reference>
<reference key="12">
    <citation type="journal article" date="2006" name="FEBS J.">
        <title>Structural and biochemical characterization of a human adenovirus 2/12 penton base chimera.</title>
        <authorList>
            <person name="Zubieta C."/>
            <person name="Blanchoin L."/>
            <person name="Cusack S."/>
        </authorList>
    </citation>
    <scope>X-RAY CRYSTALLOGRAPHY (3.6 ANGSTROMS) OF 49-571</scope>
</reference>
<evidence type="ECO:0000255" key="1">
    <source>
        <dbReference type="HAMAP-Rule" id="MF_04052"/>
    </source>
</evidence>
<evidence type="ECO:0000256" key="2">
    <source>
        <dbReference type="SAM" id="MobiDB-lite"/>
    </source>
</evidence>
<evidence type="ECO:0000269" key="3">
    <source>
    </source>
</evidence>
<evidence type="ECO:0000269" key="4">
    <source>
    </source>
</evidence>
<evidence type="ECO:0000269" key="5">
    <source>
    </source>
</evidence>
<evidence type="ECO:0000269" key="6">
    <source>
    </source>
</evidence>
<evidence type="ECO:0000269" key="7">
    <source>
    </source>
</evidence>
<evidence type="ECO:0000269" key="8">
    <source>
    </source>
</evidence>
<evidence type="ECO:0007829" key="9">
    <source>
        <dbReference type="PDB" id="1X9P"/>
    </source>
</evidence>
<evidence type="ECO:0007829" key="10">
    <source>
        <dbReference type="PDB" id="1X9T"/>
    </source>
</evidence>
<feature type="chain" id="PRO_0000221872" description="Penton protein">
    <location>
        <begin position="1"/>
        <end position="571"/>
    </location>
</feature>
<feature type="region of interest" description="Disordered" evidence="2">
    <location>
        <begin position="298"/>
        <end position="324"/>
    </location>
</feature>
<feature type="region of interest" description="Disordered" evidence="2">
    <location>
        <begin position="347"/>
        <end position="383"/>
    </location>
</feature>
<feature type="short sequence motif" description="Cell attachment site" evidence="1">
    <location>
        <begin position="340"/>
        <end position="342"/>
    </location>
</feature>
<feature type="compositionally biased region" description="Gly residues" evidence="2">
    <location>
        <begin position="303"/>
        <end position="313"/>
    </location>
</feature>
<feature type="compositionally biased region" description="Low complexity" evidence="2">
    <location>
        <begin position="314"/>
        <end position="324"/>
    </location>
</feature>
<feature type="compositionally biased region" description="Low complexity" evidence="2">
    <location>
        <begin position="356"/>
        <end position="368"/>
    </location>
</feature>
<feature type="modified residue" description="Phosphoserine; by host" evidence="8">
    <location>
        <position position="455"/>
    </location>
</feature>
<feature type="turn" evidence="9">
    <location>
        <begin position="50"/>
        <end position="52"/>
    </location>
</feature>
<feature type="strand" evidence="10">
    <location>
        <begin position="55"/>
        <end position="57"/>
    </location>
</feature>
<feature type="strand" evidence="9">
    <location>
        <begin position="58"/>
        <end position="60"/>
    </location>
</feature>
<feature type="strand" evidence="9">
    <location>
        <begin position="69"/>
        <end position="73"/>
    </location>
</feature>
<feature type="helix" evidence="9">
    <location>
        <begin position="76"/>
        <end position="81"/>
    </location>
</feature>
<feature type="strand" evidence="9">
    <location>
        <begin position="82"/>
        <end position="85"/>
    </location>
</feature>
<feature type="strand" evidence="9">
    <location>
        <begin position="90"/>
        <end position="94"/>
    </location>
</feature>
<feature type="strand" evidence="10">
    <location>
        <begin position="99"/>
        <end position="101"/>
    </location>
</feature>
<feature type="helix" evidence="9">
    <location>
        <begin position="103"/>
        <end position="106"/>
    </location>
</feature>
<feature type="strand" evidence="9">
    <location>
        <begin position="110"/>
        <end position="113"/>
    </location>
</feature>
<feature type="strand" evidence="9">
    <location>
        <begin position="117"/>
        <end position="129"/>
    </location>
</feature>
<feature type="turn" evidence="9">
    <location>
        <begin position="136"/>
        <end position="139"/>
    </location>
</feature>
<feature type="strand" evidence="9">
    <location>
        <begin position="141"/>
        <end position="152"/>
    </location>
</feature>
<feature type="strand" evidence="9">
    <location>
        <begin position="155"/>
        <end position="158"/>
    </location>
</feature>
<feature type="strand" evidence="9">
    <location>
        <begin position="160"/>
        <end position="169"/>
    </location>
</feature>
<feature type="helix" evidence="9">
    <location>
        <begin position="177"/>
        <end position="194"/>
    </location>
</feature>
<feature type="turn" evidence="9">
    <location>
        <begin position="195"/>
        <end position="200"/>
    </location>
</feature>
<feature type="helix" evidence="9">
    <location>
        <begin position="203"/>
        <end position="205"/>
    </location>
</feature>
<feature type="strand" evidence="10">
    <location>
        <begin position="209"/>
        <end position="213"/>
    </location>
</feature>
<feature type="strand" evidence="9">
    <location>
        <begin position="217"/>
        <end position="220"/>
    </location>
</feature>
<feature type="turn" evidence="9">
    <location>
        <begin position="221"/>
        <end position="224"/>
    </location>
</feature>
<feature type="strand" evidence="10">
    <location>
        <begin position="235"/>
        <end position="242"/>
    </location>
</feature>
<feature type="strand" evidence="9">
    <location>
        <begin position="247"/>
        <end position="249"/>
    </location>
</feature>
<feature type="helix" evidence="9">
    <location>
        <begin position="255"/>
        <end position="259"/>
    </location>
</feature>
<feature type="strand" evidence="9">
    <location>
        <begin position="261"/>
        <end position="265"/>
    </location>
</feature>
<feature type="strand" evidence="9">
    <location>
        <begin position="267"/>
        <end position="269"/>
    </location>
</feature>
<feature type="strand" evidence="9">
    <location>
        <begin position="272"/>
        <end position="274"/>
    </location>
</feature>
<feature type="helix" evidence="9">
    <location>
        <begin position="275"/>
        <end position="277"/>
    </location>
</feature>
<feature type="strand" evidence="9">
    <location>
        <begin position="282"/>
        <end position="284"/>
    </location>
</feature>
<feature type="helix" evidence="9">
    <location>
        <begin position="289"/>
        <end position="294"/>
    </location>
</feature>
<feature type="turn" evidence="9">
    <location>
        <begin position="349"/>
        <end position="353"/>
    </location>
</feature>
<feature type="turn" evidence="9">
    <location>
        <begin position="386"/>
        <end position="388"/>
    </location>
</feature>
<feature type="strand" evidence="9">
    <location>
        <begin position="393"/>
        <end position="397"/>
    </location>
</feature>
<feature type="strand" evidence="9">
    <location>
        <begin position="399"/>
        <end position="405"/>
    </location>
</feature>
<feature type="helix" evidence="9">
    <location>
        <begin position="406"/>
        <end position="412"/>
    </location>
</feature>
<feature type="turn" evidence="9">
    <location>
        <begin position="415"/>
        <end position="417"/>
    </location>
</feature>
<feature type="helix" evidence="9">
    <location>
        <begin position="419"/>
        <end position="422"/>
    </location>
</feature>
<feature type="strand" evidence="9">
    <location>
        <begin position="423"/>
        <end position="425"/>
    </location>
</feature>
<feature type="strand" evidence="9">
    <location>
        <begin position="436"/>
        <end position="439"/>
    </location>
</feature>
<feature type="turn" evidence="9">
    <location>
        <begin position="442"/>
        <end position="444"/>
    </location>
</feature>
<feature type="helix" evidence="9">
    <location>
        <begin position="457"/>
        <end position="459"/>
    </location>
</feature>
<feature type="strand" evidence="9">
    <location>
        <begin position="464"/>
        <end position="467"/>
    </location>
</feature>
<feature type="strand" evidence="9">
    <location>
        <begin position="469"/>
        <end position="475"/>
    </location>
</feature>
<feature type="helix" evidence="9">
    <location>
        <begin position="479"/>
        <end position="482"/>
    </location>
</feature>
<feature type="helix" evidence="9">
    <location>
        <begin position="483"/>
        <end position="485"/>
    </location>
</feature>
<feature type="strand" evidence="9">
    <location>
        <begin position="487"/>
        <end position="489"/>
    </location>
</feature>
<feature type="turn" evidence="10">
    <location>
        <begin position="495"/>
        <end position="497"/>
    </location>
</feature>
<feature type="strand" evidence="9">
    <location>
        <begin position="503"/>
        <end position="506"/>
    </location>
</feature>
<feature type="strand" evidence="9">
    <location>
        <begin position="512"/>
        <end position="519"/>
    </location>
</feature>
<feature type="strand" evidence="9">
    <location>
        <begin position="522"/>
        <end position="531"/>
    </location>
</feature>
<feature type="strand" evidence="9">
    <location>
        <begin position="533"/>
        <end position="542"/>
    </location>
</feature>
<feature type="strand" evidence="9">
    <location>
        <begin position="554"/>
        <end position="568"/>
    </location>
</feature>
<keyword id="KW-0002">3D-structure</keyword>
<keyword id="KW-0167">Capsid protein</keyword>
<keyword id="KW-1165">Clathrin-mediated endocytosis of virus by host</keyword>
<keyword id="KW-0903">Direct protein sequencing</keyword>
<keyword id="KW-1048">Host nucleus</keyword>
<keyword id="KW-0945">Host-virus interaction</keyword>
<keyword id="KW-0426">Late protein</keyword>
<keyword id="KW-0597">Phosphoprotein</keyword>
<keyword id="KW-1185">Reference proteome</keyword>
<keyword id="KW-1148">T=25 icosahedral capsid protein</keyword>
<keyword id="KW-1161">Viral attachment to host cell</keyword>
<keyword id="KW-1162">Viral penetration into host cytoplasm</keyword>
<keyword id="KW-0946">Virion</keyword>
<keyword id="KW-1164">Virus endocytosis by host</keyword>
<keyword id="KW-1160">Virus entry into host cell</keyword>